<dbReference type="EC" id="1.14.14.47" evidence="2"/>
<dbReference type="EMBL" id="CP000046">
    <property type="protein sequence ID" value="AAW36946.1"/>
    <property type="molecule type" value="Genomic_DNA"/>
</dbReference>
<dbReference type="RefSeq" id="WP_000897635.1">
    <property type="nucleotide sequence ID" value="NZ_JBGOFO010000006.1"/>
</dbReference>
<dbReference type="SMR" id="Q5HEK7"/>
<dbReference type="KEGG" id="sac:SACOL1976"/>
<dbReference type="HOGENOM" id="CLU_040293_0_0_9"/>
<dbReference type="Proteomes" id="UP000000530">
    <property type="component" value="Chromosome"/>
</dbReference>
<dbReference type="GO" id="GO:0020037">
    <property type="term" value="F:heme binding"/>
    <property type="evidence" value="ECO:0007669"/>
    <property type="project" value="InterPro"/>
</dbReference>
<dbReference type="GO" id="GO:0046872">
    <property type="term" value="F:metal ion binding"/>
    <property type="evidence" value="ECO:0007669"/>
    <property type="project" value="UniProtKB-KW"/>
</dbReference>
<dbReference type="GO" id="GO:0004517">
    <property type="term" value="F:nitric-oxide synthase activity"/>
    <property type="evidence" value="ECO:0007669"/>
    <property type="project" value="InterPro"/>
</dbReference>
<dbReference type="GO" id="GO:0006809">
    <property type="term" value="P:nitric oxide biosynthetic process"/>
    <property type="evidence" value="ECO:0007669"/>
    <property type="project" value="InterPro"/>
</dbReference>
<dbReference type="CDD" id="cd00794">
    <property type="entry name" value="NOS_oxygenase_prok"/>
    <property type="match status" value="1"/>
</dbReference>
<dbReference type="Gene3D" id="3.90.340.10">
    <property type="entry name" value="Nitric Oxide Synthase, Chain A, domain 1"/>
    <property type="match status" value="1"/>
</dbReference>
<dbReference type="Gene3D" id="3.90.1230.10">
    <property type="entry name" value="Nitric Oxide Synthase, Chain A, domain 3"/>
    <property type="match status" value="1"/>
</dbReference>
<dbReference type="Gene3D" id="3.90.440.10">
    <property type="entry name" value="Nitric Oxide Synthase,Heme Domain,Chain A domain 2"/>
    <property type="match status" value="1"/>
</dbReference>
<dbReference type="InterPro" id="IPR017142">
    <property type="entry name" value="Nitric_oxide_synthase_Oase-su"/>
</dbReference>
<dbReference type="InterPro" id="IPR050607">
    <property type="entry name" value="NOS"/>
</dbReference>
<dbReference type="InterPro" id="IPR044943">
    <property type="entry name" value="NOS_dom_1"/>
</dbReference>
<dbReference type="InterPro" id="IPR044940">
    <property type="entry name" value="NOS_dom_2"/>
</dbReference>
<dbReference type="InterPro" id="IPR044944">
    <property type="entry name" value="NOS_dom_3"/>
</dbReference>
<dbReference type="InterPro" id="IPR004030">
    <property type="entry name" value="NOS_N"/>
</dbReference>
<dbReference type="InterPro" id="IPR036119">
    <property type="entry name" value="NOS_N_sf"/>
</dbReference>
<dbReference type="PANTHER" id="PTHR43410:SF1">
    <property type="entry name" value="NITRIC OXIDE SYNTHASE"/>
    <property type="match status" value="1"/>
</dbReference>
<dbReference type="PANTHER" id="PTHR43410">
    <property type="entry name" value="NITRIC OXIDE SYNTHASE OXYGENASE"/>
    <property type="match status" value="1"/>
</dbReference>
<dbReference type="Pfam" id="PF02898">
    <property type="entry name" value="NO_synthase"/>
    <property type="match status" value="1"/>
</dbReference>
<dbReference type="PIRSF" id="PIRSF037219">
    <property type="entry name" value="NOS_oxygenase"/>
    <property type="match status" value="1"/>
</dbReference>
<dbReference type="SUPFAM" id="SSF56512">
    <property type="entry name" value="Nitric oxide (NO) synthase oxygenase domain"/>
    <property type="match status" value="1"/>
</dbReference>
<dbReference type="PROSITE" id="PS60001">
    <property type="entry name" value="NOS"/>
    <property type="match status" value="1"/>
</dbReference>
<organism>
    <name type="scientific">Staphylococcus aureus (strain COL)</name>
    <dbReference type="NCBI Taxonomy" id="93062"/>
    <lineage>
        <taxon>Bacteria</taxon>
        <taxon>Bacillati</taxon>
        <taxon>Bacillota</taxon>
        <taxon>Bacilli</taxon>
        <taxon>Bacillales</taxon>
        <taxon>Staphylococcaceae</taxon>
        <taxon>Staphylococcus</taxon>
    </lineage>
</organism>
<sequence length="358" mass="41710">MLFKEAQAFIENMYKECHYETQIINKRLHDIELEIKETGTYTHTEEELIYGAKMAWRNSNRCIGRLFWDSLNVIDARDVTDEASFLSSITYHITQATNEGKLKPYITIYAPKDGPKIFNNQLIRYAGYDNCGDPAEKEVTRLANHLGWKGKGTNFDVLPLIYQLPNESVKFYEYPTSLIKEVPIEHNHYPKLRKLNLKWYAVPIISNMDLKIGGIVYPTAPFNGWYMVTEIGVRNFIDDYRYNLLEKVADAFEFDTLKNNSFNKDRALVELNYAVYHSFKKEGVSIVDHLTAAKQFELFERNEAQQGRQVTGKWSWLAPPLSPTLTSNYHHGYDNTVKDPNFFYKKKESNANQCPFHH</sequence>
<reference key="1">
    <citation type="journal article" date="2005" name="J. Bacteriol.">
        <title>Insights on evolution of virulence and resistance from the complete genome analysis of an early methicillin-resistant Staphylococcus aureus strain and a biofilm-producing methicillin-resistant Staphylococcus epidermidis strain.</title>
        <authorList>
            <person name="Gill S.R."/>
            <person name="Fouts D.E."/>
            <person name="Archer G.L."/>
            <person name="Mongodin E.F."/>
            <person name="DeBoy R.T."/>
            <person name="Ravel J."/>
            <person name="Paulsen I.T."/>
            <person name="Kolonay J.F."/>
            <person name="Brinkac L.M."/>
            <person name="Beanan M.J."/>
            <person name="Dodson R.J."/>
            <person name="Daugherty S.C."/>
            <person name="Madupu R."/>
            <person name="Angiuoli S.V."/>
            <person name="Durkin A.S."/>
            <person name="Haft D.H."/>
            <person name="Vamathevan J.J."/>
            <person name="Khouri H."/>
            <person name="Utterback T.R."/>
            <person name="Lee C."/>
            <person name="Dimitrov G."/>
            <person name="Jiang L."/>
            <person name="Qin H."/>
            <person name="Weidman J."/>
            <person name="Tran K."/>
            <person name="Kang K.H."/>
            <person name="Hance I.R."/>
            <person name="Nelson K.E."/>
            <person name="Fraser C.M."/>
        </authorList>
    </citation>
    <scope>NUCLEOTIDE SEQUENCE [LARGE SCALE GENOMIC DNA]</scope>
    <source>
        <strain>COL</strain>
    </source>
</reference>
<keyword id="KW-0349">Heme</keyword>
<keyword id="KW-0408">Iron</keyword>
<keyword id="KW-0479">Metal-binding</keyword>
<keyword id="KW-0560">Oxidoreductase</keyword>
<gene>
    <name type="primary">nos</name>
    <name type="ordered locus">SACOL1976</name>
</gene>
<protein>
    <recommendedName>
        <fullName>Nitric oxide synthase oxygenase</fullName>
        <ecNumber evidence="2">1.14.14.47</ecNumber>
    </recommendedName>
    <alternativeName>
        <fullName>NOSoxy-like protein</fullName>
    </alternativeName>
    <alternativeName>
        <fullName>SANOS</fullName>
    </alternativeName>
</protein>
<comment type="function">
    <text evidence="2">Catalyzes the production of nitric oxide.</text>
</comment>
<comment type="catalytic activity">
    <reaction evidence="2">
        <text>3 reduced [flavodoxin] + 2 L-arginine + 4 O2 = 3 oxidized [flavodoxin] + 2 L-citrulline + 2 nitric oxide + 4 H2O + 5 H(+)</text>
        <dbReference type="Rhea" id="RHEA:52324"/>
        <dbReference type="Rhea" id="RHEA-COMP:10622"/>
        <dbReference type="Rhea" id="RHEA-COMP:10623"/>
        <dbReference type="ChEBI" id="CHEBI:15377"/>
        <dbReference type="ChEBI" id="CHEBI:15378"/>
        <dbReference type="ChEBI" id="CHEBI:15379"/>
        <dbReference type="ChEBI" id="CHEBI:16480"/>
        <dbReference type="ChEBI" id="CHEBI:32682"/>
        <dbReference type="ChEBI" id="CHEBI:57618"/>
        <dbReference type="ChEBI" id="CHEBI:57743"/>
        <dbReference type="ChEBI" id="CHEBI:58210"/>
        <dbReference type="EC" id="1.14.14.47"/>
    </reaction>
</comment>
<comment type="cofactor">
    <cofactor evidence="2">
        <name>heme</name>
        <dbReference type="ChEBI" id="CHEBI:30413"/>
    </cofactor>
</comment>
<comment type="cofactor">
    <cofactor evidence="2">
        <name>(6S)-5,6,7,8-tetrahydrofolate</name>
        <dbReference type="ChEBI" id="CHEBI:57453"/>
    </cofactor>
</comment>
<comment type="subunit">
    <text evidence="2">Homodimer.</text>
</comment>
<comment type="miscellaneous">
    <text>This protein is similar to the oxygenase domain of eukaryotic nitric oxide synthases but lacks the reductase domain which, in eukaryotes, is responsible for transfer of electrons to the ferric heme during nitric oxide synthesis.</text>
</comment>
<comment type="similarity">
    <text evidence="3">Belongs to the NOS family. Bacterial NOS oxygenase subfamily.</text>
</comment>
<proteinExistence type="inferred from homology"/>
<evidence type="ECO:0000250" key="1"/>
<evidence type="ECO:0000250" key="2">
    <source>
        <dbReference type="UniProtKB" id="O34453"/>
    </source>
</evidence>
<evidence type="ECO:0000305" key="3"/>
<name>NOSO_STAAC</name>
<feature type="chain" id="PRO_0000170955" description="Nitric oxide synthase oxygenase">
    <location>
        <begin position="1"/>
        <end position="358"/>
    </location>
</feature>
<feature type="binding site" description="axial binding residue" evidence="1">
    <location>
        <position position="62"/>
    </location>
    <ligand>
        <name>heme</name>
        <dbReference type="ChEBI" id="CHEBI:30413"/>
    </ligand>
    <ligandPart>
        <name>Fe</name>
        <dbReference type="ChEBI" id="CHEBI:18248"/>
    </ligandPart>
</feature>
<accession>Q5HEK7</accession>